<sequence length="160" mass="17116">MTRGLVFFVSTACGILADQLSKFIITANLATGTSIPESGFFQIVHVHNTGAAFSIFRGHIEWLIAASVLGVILAMTAFFIRKKLPFLDTRPGLIALGVILAGTVGNLIDRVRLGYVTDFIRVGDFPTFNIADSCLTVGVIGLLLLYIVSSHVSGDTSENV</sequence>
<accession>Q3ZYT1</accession>
<reference key="1">
    <citation type="journal article" date="2005" name="Nat. Biotechnol.">
        <title>Genome sequence of the chlorinated compound-respiring bacterium Dehalococcoides species strain CBDB1.</title>
        <authorList>
            <person name="Kube M."/>
            <person name="Beck A."/>
            <person name="Zinder S.H."/>
            <person name="Kuhl H."/>
            <person name="Reinhardt R."/>
            <person name="Adrian L."/>
        </authorList>
    </citation>
    <scope>NUCLEOTIDE SEQUENCE [LARGE SCALE GENOMIC DNA]</scope>
    <source>
        <strain>CBDB1</strain>
    </source>
</reference>
<evidence type="ECO:0000255" key="1">
    <source>
        <dbReference type="HAMAP-Rule" id="MF_00161"/>
    </source>
</evidence>
<organism>
    <name type="scientific">Dehalococcoides mccartyi (strain CBDB1)</name>
    <dbReference type="NCBI Taxonomy" id="255470"/>
    <lineage>
        <taxon>Bacteria</taxon>
        <taxon>Bacillati</taxon>
        <taxon>Chloroflexota</taxon>
        <taxon>Dehalococcoidia</taxon>
        <taxon>Dehalococcoidales</taxon>
        <taxon>Dehalococcoidaceae</taxon>
        <taxon>Dehalococcoides</taxon>
    </lineage>
</organism>
<feature type="chain" id="PRO_1000058233" description="Lipoprotein signal peptidase">
    <location>
        <begin position="1"/>
        <end position="160"/>
    </location>
</feature>
<feature type="transmembrane region" description="Helical" evidence="1">
    <location>
        <begin position="60"/>
        <end position="80"/>
    </location>
</feature>
<feature type="transmembrane region" description="Helical" evidence="1">
    <location>
        <begin position="84"/>
        <end position="104"/>
    </location>
</feature>
<feature type="transmembrane region" description="Helical" evidence="1">
    <location>
        <begin position="128"/>
        <end position="148"/>
    </location>
</feature>
<feature type="active site" evidence="1">
    <location>
        <position position="118"/>
    </location>
</feature>
<feature type="active site" evidence="1">
    <location>
        <position position="132"/>
    </location>
</feature>
<name>LSPA_DEHMC</name>
<dbReference type="EC" id="3.4.23.36" evidence="1"/>
<dbReference type="EMBL" id="AJ965256">
    <property type="protein sequence ID" value="CAI83381.1"/>
    <property type="molecule type" value="Genomic_DNA"/>
</dbReference>
<dbReference type="RefSeq" id="WP_011309732.1">
    <property type="nucleotide sequence ID" value="NC_007356.1"/>
</dbReference>
<dbReference type="SMR" id="Q3ZYT1"/>
<dbReference type="KEGG" id="deh:cbdbA1327"/>
<dbReference type="HOGENOM" id="CLU_083252_4_0_0"/>
<dbReference type="UniPathway" id="UPA00665"/>
<dbReference type="Proteomes" id="UP000000433">
    <property type="component" value="Chromosome"/>
</dbReference>
<dbReference type="GO" id="GO:0005886">
    <property type="term" value="C:plasma membrane"/>
    <property type="evidence" value="ECO:0007669"/>
    <property type="project" value="UniProtKB-SubCell"/>
</dbReference>
<dbReference type="GO" id="GO:0004190">
    <property type="term" value="F:aspartic-type endopeptidase activity"/>
    <property type="evidence" value="ECO:0007669"/>
    <property type="project" value="UniProtKB-UniRule"/>
</dbReference>
<dbReference type="GO" id="GO:0006508">
    <property type="term" value="P:proteolysis"/>
    <property type="evidence" value="ECO:0007669"/>
    <property type="project" value="UniProtKB-KW"/>
</dbReference>
<dbReference type="HAMAP" id="MF_00161">
    <property type="entry name" value="LspA"/>
    <property type="match status" value="1"/>
</dbReference>
<dbReference type="InterPro" id="IPR001872">
    <property type="entry name" value="Peptidase_A8"/>
</dbReference>
<dbReference type="NCBIfam" id="TIGR00077">
    <property type="entry name" value="lspA"/>
    <property type="match status" value="1"/>
</dbReference>
<dbReference type="NCBIfam" id="NF011365">
    <property type="entry name" value="PRK14784.1"/>
    <property type="match status" value="1"/>
</dbReference>
<dbReference type="PANTHER" id="PTHR33695">
    <property type="entry name" value="LIPOPROTEIN SIGNAL PEPTIDASE"/>
    <property type="match status" value="1"/>
</dbReference>
<dbReference type="PANTHER" id="PTHR33695:SF1">
    <property type="entry name" value="LIPOPROTEIN SIGNAL PEPTIDASE"/>
    <property type="match status" value="1"/>
</dbReference>
<dbReference type="Pfam" id="PF01252">
    <property type="entry name" value="Peptidase_A8"/>
    <property type="match status" value="1"/>
</dbReference>
<dbReference type="PRINTS" id="PR00781">
    <property type="entry name" value="LIPOSIGPTASE"/>
</dbReference>
<dbReference type="PROSITE" id="PS00855">
    <property type="entry name" value="SPASE_II"/>
    <property type="match status" value="1"/>
</dbReference>
<protein>
    <recommendedName>
        <fullName evidence="1">Lipoprotein signal peptidase</fullName>
        <ecNumber evidence="1">3.4.23.36</ecNumber>
    </recommendedName>
    <alternativeName>
        <fullName evidence="1">Prolipoprotein signal peptidase</fullName>
    </alternativeName>
    <alternativeName>
        <fullName evidence="1">Signal peptidase II</fullName>
        <shortName evidence="1">SPase II</shortName>
    </alternativeName>
</protein>
<proteinExistence type="inferred from homology"/>
<keyword id="KW-0064">Aspartyl protease</keyword>
<keyword id="KW-1003">Cell membrane</keyword>
<keyword id="KW-0378">Hydrolase</keyword>
<keyword id="KW-0472">Membrane</keyword>
<keyword id="KW-0645">Protease</keyword>
<keyword id="KW-0812">Transmembrane</keyword>
<keyword id="KW-1133">Transmembrane helix</keyword>
<gene>
    <name evidence="1" type="primary">lspA</name>
    <name type="ordered locus">cbdbA1327</name>
</gene>
<comment type="function">
    <text evidence="1">This protein specifically catalyzes the removal of signal peptides from prolipoproteins.</text>
</comment>
<comment type="catalytic activity">
    <reaction evidence="1">
        <text>Release of signal peptides from bacterial membrane prolipoproteins. Hydrolyzes -Xaa-Yaa-Zaa-|-(S,diacylglyceryl)Cys-, in which Xaa is hydrophobic (preferably Leu), and Yaa (Ala or Ser) and Zaa (Gly or Ala) have small, neutral side chains.</text>
        <dbReference type="EC" id="3.4.23.36"/>
    </reaction>
</comment>
<comment type="pathway">
    <text evidence="1">Protein modification; lipoprotein biosynthesis (signal peptide cleavage).</text>
</comment>
<comment type="subcellular location">
    <subcellularLocation>
        <location evidence="1">Cell membrane</location>
        <topology evidence="1">Multi-pass membrane protein</topology>
    </subcellularLocation>
</comment>
<comment type="similarity">
    <text evidence="1">Belongs to the peptidase A8 family.</text>
</comment>